<proteinExistence type="inferred from homology"/>
<organism>
    <name type="scientific">Archaeoglobus fulgidus (strain ATCC 49558 / DSM 4304 / JCM 9628 / NBRC 100126 / VC-16)</name>
    <dbReference type="NCBI Taxonomy" id="224325"/>
    <lineage>
        <taxon>Archaea</taxon>
        <taxon>Methanobacteriati</taxon>
        <taxon>Methanobacteriota</taxon>
        <taxon>Archaeoglobi</taxon>
        <taxon>Archaeoglobales</taxon>
        <taxon>Archaeoglobaceae</taxon>
        <taxon>Archaeoglobus</taxon>
    </lineage>
</organism>
<comment type="catalytic activity">
    <reaction>
        <text>tRNA(Lys) + L-lysine + ATP = L-lysyl-tRNA(Lys) + AMP + diphosphate</text>
        <dbReference type="Rhea" id="RHEA:20792"/>
        <dbReference type="Rhea" id="RHEA-COMP:9696"/>
        <dbReference type="Rhea" id="RHEA-COMP:9697"/>
        <dbReference type="ChEBI" id="CHEBI:30616"/>
        <dbReference type="ChEBI" id="CHEBI:32551"/>
        <dbReference type="ChEBI" id="CHEBI:33019"/>
        <dbReference type="ChEBI" id="CHEBI:78442"/>
        <dbReference type="ChEBI" id="CHEBI:78529"/>
        <dbReference type="ChEBI" id="CHEBI:456215"/>
        <dbReference type="EC" id="6.1.1.6"/>
    </reaction>
</comment>
<comment type="subcellular location">
    <subcellularLocation>
        <location evidence="1">Cytoplasm</location>
    </subcellularLocation>
</comment>
<comment type="similarity">
    <text evidence="2">Belongs to the class-I aminoacyl-tRNA synthetase family.</text>
</comment>
<gene>
    <name type="primary">lysS</name>
    <name type="ordered locus">AF_1216</name>
</gene>
<accession>O29052</accession>
<reference key="1">
    <citation type="journal article" date="1997" name="Nature">
        <title>The complete genome sequence of the hyperthermophilic, sulphate-reducing archaeon Archaeoglobus fulgidus.</title>
        <authorList>
            <person name="Klenk H.-P."/>
            <person name="Clayton R.A."/>
            <person name="Tomb J.-F."/>
            <person name="White O."/>
            <person name="Nelson K.E."/>
            <person name="Ketchum K.A."/>
            <person name="Dodson R.J."/>
            <person name="Gwinn M.L."/>
            <person name="Hickey E.K."/>
            <person name="Peterson J.D."/>
            <person name="Richardson D.L."/>
            <person name="Kerlavage A.R."/>
            <person name="Graham D.E."/>
            <person name="Kyrpides N.C."/>
            <person name="Fleischmann R.D."/>
            <person name="Quackenbush J."/>
            <person name="Lee N.H."/>
            <person name="Sutton G.G."/>
            <person name="Gill S.R."/>
            <person name="Kirkness E.F."/>
            <person name="Dougherty B.A."/>
            <person name="McKenney K."/>
            <person name="Adams M.D."/>
            <person name="Loftus B.J."/>
            <person name="Peterson S.N."/>
            <person name="Reich C.I."/>
            <person name="McNeil L.K."/>
            <person name="Badger J.H."/>
            <person name="Glodek A."/>
            <person name="Zhou L."/>
            <person name="Overbeek R."/>
            <person name="Gocayne J.D."/>
            <person name="Weidman J.F."/>
            <person name="McDonald L.A."/>
            <person name="Utterback T.R."/>
            <person name="Cotton M.D."/>
            <person name="Spriggs T."/>
            <person name="Artiach P."/>
            <person name="Kaine B.P."/>
            <person name="Sykes S.M."/>
            <person name="Sadow P.W."/>
            <person name="D'Andrea K.P."/>
            <person name="Bowman C."/>
            <person name="Fujii C."/>
            <person name="Garland S.A."/>
            <person name="Mason T.M."/>
            <person name="Olsen G.J."/>
            <person name="Fraser C.M."/>
            <person name="Smith H.O."/>
            <person name="Woese C.R."/>
            <person name="Venter J.C."/>
        </authorList>
    </citation>
    <scope>NUCLEOTIDE SEQUENCE [LARGE SCALE GENOMIC DNA]</scope>
    <source>
        <strain>ATCC 49558 / DSM 4304 / JCM 9628 / NBRC 100126 / VC-16</strain>
    </source>
</reference>
<feature type="chain" id="PRO_0000152747" description="Lysine--tRNA ligase">
    <location>
        <begin position="1"/>
        <end position="493"/>
    </location>
</feature>
<feature type="short sequence motif" description="'HIGH' region">
    <location>
        <begin position="26"/>
        <end position="34"/>
    </location>
</feature>
<feature type="short sequence motif" description="'KMSKS' region">
    <location>
        <begin position="270"/>
        <end position="274"/>
    </location>
</feature>
<evidence type="ECO:0000250" key="1"/>
<evidence type="ECO:0000305" key="2"/>
<name>SYK_ARCFU</name>
<keyword id="KW-0030">Aminoacyl-tRNA synthetase</keyword>
<keyword id="KW-0067">ATP-binding</keyword>
<keyword id="KW-0963">Cytoplasm</keyword>
<keyword id="KW-0436">Ligase</keyword>
<keyword id="KW-0547">Nucleotide-binding</keyword>
<keyword id="KW-0648">Protein biosynthesis</keyword>
<keyword id="KW-1185">Reference proteome</keyword>
<protein>
    <recommendedName>
        <fullName>Lysine--tRNA ligase</fullName>
        <ecNumber>6.1.1.6</ecNumber>
    </recommendedName>
    <alternativeName>
        <fullName>Lysyl-tRNA synthetase</fullName>
        <shortName>LysRS</shortName>
    </alternativeName>
</protein>
<dbReference type="EC" id="6.1.1.6"/>
<dbReference type="EMBL" id="AE000782">
    <property type="protein sequence ID" value="AAB90029.1"/>
    <property type="molecule type" value="Genomic_DNA"/>
</dbReference>
<dbReference type="PIR" id="G69401">
    <property type="entry name" value="G69401"/>
</dbReference>
<dbReference type="RefSeq" id="WP_010878711.1">
    <property type="nucleotide sequence ID" value="NC_000917.1"/>
</dbReference>
<dbReference type="SMR" id="O29052"/>
<dbReference type="STRING" id="224325.AF_1216"/>
<dbReference type="PaxDb" id="224325-AF_1216"/>
<dbReference type="EnsemblBacteria" id="AAB90029">
    <property type="protein sequence ID" value="AAB90029"/>
    <property type="gene ID" value="AF_1216"/>
</dbReference>
<dbReference type="GeneID" id="24794821"/>
<dbReference type="KEGG" id="afu:AF_1216"/>
<dbReference type="eggNOG" id="arCOG00485">
    <property type="taxonomic scope" value="Archaea"/>
</dbReference>
<dbReference type="HOGENOM" id="CLU_025562_1_0_2"/>
<dbReference type="OrthoDB" id="6838at2157"/>
<dbReference type="PhylomeDB" id="O29052"/>
<dbReference type="Proteomes" id="UP000002199">
    <property type="component" value="Chromosome"/>
</dbReference>
<dbReference type="GO" id="GO:0005737">
    <property type="term" value="C:cytoplasm"/>
    <property type="evidence" value="ECO:0007669"/>
    <property type="project" value="UniProtKB-SubCell"/>
</dbReference>
<dbReference type="GO" id="GO:0005524">
    <property type="term" value="F:ATP binding"/>
    <property type="evidence" value="ECO:0007669"/>
    <property type="project" value="UniProtKB-UniRule"/>
</dbReference>
<dbReference type="GO" id="GO:0004824">
    <property type="term" value="F:lysine-tRNA ligase activity"/>
    <property type="evidence" value="ECO:0007669"/>
    <property type="project" value="UniProtKB-UniRule"/>
</dbReference>
<dbReference type="GO" id="GO:0000049">
    <property type="term" value="F:tRNA binding"/>
    <property type="evidence" value="ECO:0007669"/>
    <property type="project" value="InterPro"/>
</dbReference>
<dbReference type="GO" id="GO:0006430">
    <property type="term" value="P:lysyl-tRNA aminoacylation"/>
    <property type="evidence" value="ECO:0007669"/>
    <property type="project" value="UniProtKB-UniRule"/>
</dbReference>
<dbReference type="CDD" id="cd00674">
    <property type="entry name" value="LysRS_core_class_I"/>
    <property type="match status" value="1"/>
</dbReference>
<dbReference type="Gene3D" id="1.10.10.350">
    <property type="match status" value="1"/>
</dbReference>
<dbReference type="Gene3D" id="1.10.10.770">
    <property type="match status" value="1"/>
</dbReference>
<dbReference type="Gene3D" id="3.40.50.620">
    <property type="entry name" value="HUPs"/>
    <property type="match status" value="2"/>
</dbReference>
<dbReference type="Gene3D" id="6.10.20.10">
    <property type="entry name" value="Lysine tRNA ligase, stem contact fold domain"/>
    <property type="match status" value="1"/>
</dbReference>
<dbReference type="HAMAP" id="MF_00177">
    <property type="entry name" value="Lys_tRNA_synth_class1"/>
    <property type="match status" value="1"/>
</dbReference>
<dbReference type="InterPro" id="IPR045462">
    <property type="entry name" value="aa-tRNA-synth_I_cd-bd"/>
</dbReference>
<dbReference type="InterPro" id="IPR020751">
    <property type="entry name" value="aa-tRNA-synth_I_codon-bd_sub2"/>
</dbReference>
<dbReference type="InterPro" id="IPR001412">
    <property type="entry name" value="aa-tRNA-synth_I_CS"/>
</dbReference>
<dbReference type="InterPro" id="IPR008925">
    <property type="entry name" value="aa_tRNA-synth_I_cd-bd_sf"/>
</dbReference>
<dbReference type="InterPro" id="IPR002904">
    <property type="entry name" value="Lys-tRNA-ligase"/>
</dbReference>
<dbReference type="InterPro" id="IPR042078">
    <property type="entry name" value="Lys-tRNA-ligase_SC_fold"/>
</dbReference>
<dbReference type="InterPro" id="IPR014729">
    <property type="entry name" value="Rossmann-like_a/b/a_fold"/>
</dbReference>
<dbReference type="NCBIfam" id="TIGR00467">
    <property type="entry name" value="lysS_arch"/>
    <property type="match status" value="1"/>
</dbReference>
<dbReference type="PANTHER" id="PTHR37940">
    <property type="entry name" value="LYSINE--TRNA LIGASE"/>
    <property type="match status" value="1"/>
</dbReference>
<dbReference type="PANTHER" id="PTHR37940:SF1">
    <property type="entry name" value="LYSINE--TRNA LIGASE"/>
    <property type="match status" value="1"/>
</dbReference>
<dbReference type="Pfam" id="PF19269">
    <property type="entry name" value="Anticodon_2"/>
    <property type="match status" value="1"/>
</dbReference>
<dbReference type="Pfam" id="PF01921">
    <property type="entry name" value="tRNA-synt_1f"/>
    <property type="match status" value="1"/>
</dbReference>
<dbReference type="SUPFAM" id="SSF48163">
    <property type="entry name" value="An anticodon-binding domain of class I aminoacyl-tRNA synthetases"/>
    <property type="match status" value="1"/>
</dbReference>
<dbReference type="SUPFAM" id="SSF52374">
    <property type="entry name" value="Nucleotidylyl transferase"/>
    <property type="match status" value="1"/>
</dbReference>
<dbReference type="PROSITE" id="PS00178">
    <property type="entry name" value="AA_TRNA_LIGASE_I"/>
    <property type="match status" value="1"/>
</dbReference>
<sequence>MHWADVIAADLLKRSNSHRIATGISPSGHIHLGNLREMVTADAIRRALLDAGGEAKIVYIADDFDPLRRRYPFLPEEYENYVGMPLCKIPDPEGCHDSYSEHFLQPFLESLEILGIPVEVRRAYQMYSEGLYENNTRIALKRRDEIARIIAEVTGRELEERWYPFMPLCENCGRINSTRVTSFDENWIYYECDCGHSGRVGYVGGGKLTWRVDWAARWQILSITCEPFGKDHAAAGGSYDTGVRIAREIFDYEPPYPVPYEWIHLKGKGAMKSSKGIVLPVREMVEVIPPEIVRYITIRVKPERHIEFDPGLGLLDLVEEFEEKFKEKDRSVELSLVGEVVYSDVPFRHLIVVGQIANWDLEKALEIIERTGYTVDDVTRRDVERRLKYARKWLEKYAPDNIKFEIPEKVTAEFSEEEKKFLRAYAERLRSDMKPEEIHTLVYDVSKEVGIKSSKAFQAIYKAILGKTYGPRVGYFIKSLGVEWVRERIKAAL</sequence>